<organism>
    <name type="scientific">Yersinia pseudotuberculosis serotype O:3 (strain YPIII)</name>
    <dbReference type="NCBI Taxonomy" id="502800"/>
    <lineage>
        <taxon>Bacteria</taxon>
        <taxon>Pseudomonadati</taxon>
        <taxon>Pseudomonadota</taxon>
        <taxon>Gammaproteobacteria</taxon>
        <taxon>Enterobacterales</taxon>
        <taxon>Yersiniaceae</taxon>
        <taxon>Yersinia</taxon>
    </lineage>
</organism>
<accession>B1JHH1</accession>
<dbReference type="EC" id="1.5.3.-" evidence="1"/>
<dbReference type="EMBL" id="CP000950">
    <property type="protein sequence ID" value="ACA67965.1"/>
    <property type="molecule type" value="Genomic_DNA"/>
</dbReference>
<dbReference type="RefSeq" id="WP_002211850.1">
    <property type="nucleotide sequence ID" value="NZ_CP009792.1"/>
</dbReference>
<dbReference type="SMR" id="B1JHH1"/>
<dbReference type="GeneID" id="57976231"/>
<dbReference type="KEGG" id="ypy:YPK_1672"/>
<dbReference type="PATRIC" id="fig|502800.11.peg.2332"/>
<dbReference type="GO" id="GO:0005829">
    <property type="term" value="C:cytosol"/>
    <property type="evidence" value="ECO:0007669"/>
    <property type="project" value="TreeGrafter"/>
</dbReference>
<dbReference type="GO" id="GO:0050660">
    <property type="term" value="F:flavin adenine dinucleotide binding"/>
    <property type="evidence" value="ECO:0007669"/>
    <property type="project" value="InterPro"/>
</dbReference>
<dbReference type="GO" id="GO:0050131">
    <property type="term" value="F:N-methyl-L-amino-acid oxidase activity"/>
    <property type="evidence" value="ECO:0007669"/>
    <property type="project" value="InterPro"/>
</dbReference>
<dbReference type="GO" id="GO:0008115">
    <property type="term" value="F:sarcosine oxidase activity"/>
    <property type="evidence" value="ECO:0007669"/>
    <property type="project" value="TreeGrafter"/>
</dbReference>
<dbReference type="Gene3D" id="3.30.9.10">
    <property type="entry name" value="D-Amino Acid Oxidase, subunit A, domain 2"/>
    <property type="match status" value="1"/>
</dbReference>
<dbReference type="Gene3D" id="3.50.50.60">
    <property type="entry name" value="FAD/NAD(P)-binding domain"/>
    <property type="match status" value="1"/>
</dbReference>
<dbReference type="HAMAP" id="MF_00515">
    <property type="entry name" value="MTOX"/>
    <property type="match status" value="1"/>
</dbReference>
<dbReference type="InterPro" id="IPR006076">
    <property type="entry name" value="FAD-dep_OxRdtase"/>
</dbReference>
<dbReference type="InterPro" id="IPR036188">
    <property type="entry name" value="FAD/NAD-bd_sf"/>
</dbReference>
<dbReference type="InterPro" id="IPR023493">
    <property type="entry name" value="Me_Trp_Oxase_MTOX"/>
</dbReference>
<dbReference type="InterPro" id="IPR045170">
    <property type="entry name" value="MTOX"/>
</dbReference>
<dbReference type="NCBIfam" id="NF008425">
    <property type="entry name" value="PRK11259.1"/>
    <property type="match status" value="1"/>
</dbReference>
<dbReference type="PANTHER" id="PTHR10961:SF7">
    <property type="entry name" value="FAD DEPENDENT OXIDOREDUCTASE DOMAIN-CONTAINING PROTEIN"/>
    <property type="match status" value="1"/>
</dbReference>
<dbReference type="PANTHER" id="PTHR10961">
    <property type="entry name" value="PEROXISOMAL SARCOSINE OXIDASE"/>
    <property type="match status" value="1"/>
</dbReference>
<dbReference type="Pfam" id="PF01266">
    <property type="entry name" value="DAO"/>
    <property type="match status" value="1"/>
</dbReference>
<dbReference type="SUPFAM" id="SSF54373">
    <property type="entry name" value="FAD-linked reductases, C-terminal domain"/>
    <property type="match status" value="1"/>
</dbReference>
<dbReference type="SUPFAM" id="SSF51905">
    <property type="entry name" value="FAD/NAD(P)-binding domain"/>
    <property type="match status" value="1"/>
</dbReference>
<comment type="function">
    <text evidence="1">Catalyzes the oxidative demethylation of N-methyl-L-tryptophan.</text>
</comment>
<comment type="catalytic activity">
    <reaction evidence="1">
        <text>N(alpha)-methyl-L-tryptophan + O2 + H2O = L-tryptophan + formaldehyde + H2O2</text>
        <dbReference type="Rhea" id="RHEA:28006"/>
        <dbReference type="ChEBI" id="CHEBI:15377"/>
        <dbReference type="ChEBI" id="CHEBI:15379"/>
        <dbReference type="ChEBI" id="CHEBI:16240"/>
        <dbReference type="ChEBI" id="CHEBI:16842"/>
        <dbReference type="ChEBI" id="CHEBI:57283"/>
        <dbReference type="ChEBI" id="CHEBI:57912"/>
    </reaction>
</comment>
<comment type="cofactor">
    <cofactor evidence="1">
        <name>FAD</name>
        <dbReference type="ChEBI" id="CHEBI:57692"/>
    </cofactor>
    <text evidence="1">Binds 1 FAD per subunit.</text>
</comment>
<comment type="subunit">
    <text evidence="1">Monomer.</text>
</comment>
<comment type="similarity">
    <text evidence="1">Belongs to the MSOX/MTOX family. MTOX subfamily.</text>
</comment>
<gene>
    <name evidence="1" type="primary">solA</name>
    <name type="ordered locus">YPK_1672</name>
</gene>
<keyword id="KW-0274">FAD</keyword>
<keyword id="KW-0285">Flavoprotein</keyword>
<keyword id="KW-0560">Oxidoreductase</keyword>
<feature type="chain" id="PRO_1000127453" description="N-methyl-L-tryptophan oxidase">
    <location>
        <begin position="1"/>
        <end position="371"/>
    </location>
</feature>
<feature type="binding site" evidence="1">
    <location>
        <begin position="4"/>
        <end position="34"/>
    </location>
    <ligand>
        <name>FAD</name>
        <dbReference type="ChEBI" id="CHEBI:57692"/>
    </ligand>
</feature>
<feature type="modified residue" description="S-8alpha-FAD cysteine" evidence="1">
    <location>
        <position position="307"/>
    </location>
</feature>
<protein>
    <recommendedName>
        <fullName evidence="1">N-methyl-L-tryptophan oxidase</fullName>
        <shortName evidence="1">MTOX</shortName>
        <ecNumber evidence="1">1.5.3.-</ecNumber>
    </recommendedName>
</protein>
<sequence>MDYDLIVIGSGSVGSAAGYYASQAGLNVLMIDSAMPPHQAGSHHGETRIMRHAYGEGEKYVPLVLRAQALWDQLAAQTGEKLFQACGVINLGPDNSTFLQNVQRSAQQYDLPVETLNSTQIREKWPVFTVPDNYIAVFEPQSGYLRSELAVKTLIKAVTEAGCGILFNCPVTAIESHQAGVDVVTIDGTYSATKVVVTAGTWVKELLPTLPVTPVRKVFSWHQADGRYSEANHFPAFTVEMPDNILYYGFPAQNDALKLGKHHGGQLIESAAQRKPFGRYAEDGTEVFSFLRHFLPGVGVCLRGEACSYDMSPDEDFIIDTLPEDERVMVVSGLSGHGFKFATALGEVAALFAQDKPSPIDISAFSLARFR</sequence>
<name>MTOX_YERPY</name>
<reference key="1">
    <citation type="submission" date="2008-02" db="EMBL/GenBank/DDBJ databases">
        <title>Complete sequence of Yersinia pseudotuberculosis YPIII.</title>
        <authorList>
            <consortium name="US DOE Joint Genome Institute"/>
            <person name="Copeland A."/>
            <person name="Lucas S."/>
            <person name="Lapidus A."/>
            <person name="Glavina del Rio T."/>
            <person name="Dalin E."/>
            <person name="Tice H."/>
            <person name="Bruce D."/>
            <person name="Goodwin L."/>
            <person name="Pitluck S."/>
            <person name="Munk A.C."/>
            <person name="Brettin T."/>
            <person name="Detter J.C."/>
            <person name="Han C."/>
            <person name="Tapia R."/>
            <person name="Schmutz J."/>
            <person name="Larimer F."/>
            <person name="Land M."/>
            <person name="Hauser L."/>
            <person name="Challacombe J.F."/>
            <person name="Green L."/>
            <person name="Lindler L.E."/>
            <person name="Nikolich M.P."/>
            <person name="Richardson P."/>
        </authorList>
    </citation>
    <scope>NUCLEOTIDE SEQUENCE [LARGE SCALE GENOMIC DNA]</scope>
    <source>
        <strain>YPIII</strain>
    </source>
</reference>
<evidence type="ECO:0000255" key="1">
    <source>
        <dbReference type="HAMAP-Rule" id="MF_00515"/>
    </source>
</evidence>
<proteinExistence type="inferred from homology"/>